<comment type="function">
    <text evidence="1">The SecYEG-SecDF-YajC-YidC holo-translocon (HTL) protein secretase/insertase is a supercomplex required for protein secretion, insertion of proteins into membranes, and assembly of membrane protein complexes. While the SecYEG complex is essential for assembly of a number of proteins and complexes, the SecDF-YajC-YidC subcomplex facilitates these functions.</text>
</comment>
<comment type="subunit">
    <text evidence="1">Part of the SecDF-YidC-YajC translocase complex. The SecDF-YidC-YajC translocase forms a supercomplex with SecYEG, called the holo-translocon (HTL).</text>
</comment>
<comment type="subcellular location">
    <subcellularLocation>
        <location evidence="1">Cell inner membrane</location>
        <topology evidence="1">Single-pass membrane protein</topology>
    </subcellularLocation>
</comment>
<comment type="similarity">
    <text evidence="3">Belongs to the YajC family.</text>
</comment>
<accession>Q8KA08</accession>
<feature type="chain" id="PRO_0000097027" description="Sec translocon accessory complex subunit YajC">
    <location>
        <begin position="1"/>
        <end position="110"/>
    </location>
</feature>
<feature type="transmembrane region" description="Helical" evidence="2">
    <location>
        <begin position="20"/>
        <end position="40"/>
    </location>
</feature>
<name>YAJC_BUCAP</name>
<protein>
    <recommendedName>
        <fullName>Sec translocon accessory complex subunit YajC</fullName>
    </recommendedName>
</protein>
<keyword id="KW-0997">Cell inner membrane</keyword>
<keyword id="KW-1003">Cell membrane</keyword>
<keyword id="KW-0472">Membrane</keyword>
<keyword id="KW-0653">Protein transport</keyword>
<keyword id="KW-0811">Translocation</keyword>
<keyword id="KW-0812">Transmembrane</keyword>
<keyword id="KW-1133">Transmembrane helix</keyword>
<keyword id="KW-0813">Transport</keyword>
<sequence>MSFFIKDANAAVNQALEGNSYSLIFMLVTFILIFYFMLFRPQQKKDKEHKNLMNSIAPGDEVMTTSGFLGRVKKVTENGYVLLQLNNTTEIFIKKDFIVSSLPKGTLESL</sequence>
<organism>
    <name type="scientific">Buchnera aphidicola subsp. Schizaphis graminum (strain Sg)</name>
    <dbReference type="NCBI Taxonomy" id="198804"/>
    <lineage>
        <taxon>Bacteria</taxon>
        <taxon>Pseudomonadati</taxon>
        <taxon>Pseudomonadota</taxon>
        <taxon>Gammaproteobacteria</taxon>
        <taxon>Enterobacterales</taxon>
        <taxon>Erwiniaceae</taxon>
        <taxon>Buchnera</taxon>
    </lineage>
</organism>
<proteinExistence type="inferred from homology"/>
<reference key="1">
    <citation type="journal article" date="2002" name="Science">
        <title>50 million years of genomic stasis in endosymbiotic bacteria.</title>
        <authorList>
            <person name="Tamas I."/>
            <person name="Klasson L."/>
            <person name="Canbaeck B."/>
            <person name="Naeslund A.K."/>
            <person name="Eriksson A.-S."/>
            <person name="Wernegreen J.J."/>
            <person name="Sandstroem J.P."/>
            <person name="Moran N.A."/>
            <person name="Andersson S.G.E."/>
        </authorList>
    </citation>
    <scope>NUCLEOTIDE SEQUENCE [LARGE SCALE GENOMIC DNA]</scope>
    <source>
        <strain>Sg</strain>
    </source>
</reference>
<evidence type="ECO:0000250" key="1">
    <source>
        <dbReference type="UniProtKB" id="P0ADZ7"/>
    </source>
</evidence>
<evidence type="ECO:0000255" key="2"/>
<evidence type="ECO:0000305" key="3"/>
<gene>
    <name type="primary">yajC</name>
    <name type="ordered locus">BUsg_126</name>
</gene>
<dbReference type="EMBL" id="AE013218">
    <property type="protein sequence ID" value="AAM67694.1"/>
    <property type="molecule type" value="Genomic_DNA"/>
</dbReference>
<dbReference type="RefSeq" id="WP_011053661.1">
    <property type="nucleotide sequence ID" value="NC_004061.1"/>
</dbReference>
<dbReference type="SMR" id="Q8KA08"/>
<dbReference type="STRING" id="198804.BUsg_126"/>
<dbReference type="GeneID" id="93003596"/>
<dbReference type="KEGG" id="bas:BUsg_126"/>
<dbReference type="eggNOG" id="COG1862">
    <property type="taxonomic scope" value="Bacteria"/>
</dbReference>
<dbReference type="HOGENOM" id="CLU_116157_2_1_6"/>
<dbReference type="Proteomes" id="UP000000416">
    <property type="component" value="Chromosome"/>
</dbReference>
<dbReference type="GO" id="GO:0005886">
    <property type="term" value="C:plasma membrane"/>
    <property type="evidence" value="ECO:0007669"/>
    <property type="project" value="UniProtKB-SubCell"/>
</dbReference>
<dbReference type="GO" id="GO:0015031">
    <property type="term" value="P:protein transport"/>
    <property type="evidence" value="ECO:0007669"/>
    <property type="project" value="UniProtKB-KW"/>
</dbReference>
<dbReference type="InterPro" id="IPR003849">
    <property type="entry name" value="Preprotein_translocase_YajC"/>
</dbReference>
<dbReference type="NCBIfam" id="TIGR00739">
    <property type="entry name" value="yajC"/>
    <property type="match status" value="1"/>
</dbReference>
<dbReference type="PANTHER" id="PTHR33909">
    <property type="entry name" value="SEC TRANSLOCON ACCESSORY COMPLEX SUBUNIT YAJC"/>
    <property type="match status" value="1"/>
</dbReference>
<dbReference type="PANTHER" id="PTHR33909:SF1">
    <property type="entry name" value="SEC TRANSLOCON ACCESSORY COMPLEX SUBUNIT YAJC"/>
    <property type="match status" value="1"/>
</dbReference>
<dbReference type="Pfam" id="PF02699">
    <property type="entry name" value="YajC"/>
    <property type="match status" value="1"/>
</dbReference>
<dbReference type="PRINTS" id="PR01853">
    <property type="entry name" value="YAJCTRNLCASE"/>
</dbReference>
<dbReference type="SMART" id="SM01323">
    <property type="entry name" value="YajC"/>
    <property type="match status" value="1"/>
</dbReference>